<gene>
    <name evidence="1" type="primary">rpsI</name>
    <name type="ordered locus">Bcer98_0138</name>
</gene>
<organism>
    <name type="scientific">Bacillus cytotoxicus (strain DSM 22905 / CIP 110041 / 391-98 / NVH 391-98)</name>
    <dbReference type="NCBI Taxonomy" id="315749"/>
    <lineage>
        <taxon>Bacteria</taxon>
        <taxon>Bacillati</taxon>
        <taxon>Bacillota</taxon>
        <taxon>Bacilli</taxon>
        <taxon>Bacillales</taxon>
        <taxon>Bacillaceae</taxon>
        <taxon>Bacillus</taxon>
        <taxon>Bacillus cereus group</taxon>
    </lineage>
</organism>
<evidence type="ECO:0000255" key="1">
    <source>
        <dbReference type="HAMAP-Rule" id="MF_00532"/>
    </source>
</evidence>
<evidence type="ECO:0000305" key="2"/>
<dbReference type="EMBL" id="CP000764">
    <property type="protein sequence ID" value="ABS20512.1"/>
    <property type="molecule type" value="Genomic_DNA"/>
</dbReference>
<dbReference type="RefSeq" id="WP_011983273.1">
    <property type="nucleotide sequence ID" value="NC_009674.1"/>
</dbReference>
<dbReference type="SMR" id="A7GK54"/>
<dbReference type="STRING" id="315749.Bcer98_0138"/>
<dbReference type="GeneID" id="33895459"/>
<dbReference type="KEGG" id="bcy:Bcer98_0138"/>
<dbReference type="eggNOG" id="COG0103">
    <property type="taxonomic scope" value="Bacteria"/>
</dbReference>
<dbReference type="HOGENOM" id="CLU_046483_2_1_9"/>
<dbReference type="OrthoDB" id="9803965at2"/>
<dbReference type="Proteomes" id="UP000002300">
    <property type="component" value="Chromosome"/>
</dbReference>
<dbReference type="GO" id="GO:0022627">
    <property type="term" value="C:cytosolic small ribosomal subunit"/>
    <property type="evidence" value="ECO:0007669"/>
    <property type="project" value="TreeGrafter"/>
</dbReference>
<dbReference type="GO" id="GO:0003723">
    <property type="term" value="F:RNA binding"/>
    <property type="evidence" value="ECO:0007669"/>
    <property type="project" value="TreeGrafter"/>
</dbReference>
<dbReference type="GO" id="GO:0003735">
    <property type="term" value="F:structural constituent of ribosome"/>
    <property type="evidence" value="ECO:0007669"/>
    <property type="project" value="InterPro"/>
</dbReference>
<dbReference type="GO" id="GO:0006412">
    <property type="term" value="P:translation"/>
    <property type="evidence" value="ECO:0007669"/>
    <property type="project" value="UniProtKB-UniRule"/>
</dbReference>
<dbReference type="FunFam" id="3.30.230.10:FF:000001">
    <property type="entry name" value="30S ribosomal protein S9"/>
    <property type="match status" value="1"/>
</dbReference>
<dbReference type="Gene3D" id="3.30.230.10">
    <property type="match status" value="1"/>
</dbReference>
<dbReference type="HAMAP" id="MF_00532_B">
    <property type="entry name" value="Ribosomal_uS9_B"/>
    <property type="match status" value="1"/>
</dbReference>
<dbReference type="InterPro" id="IPR020568">
    <property type="entry name" value="Ribosomal_Su5_D2-typ_SF"/>
</dbReference>
<dbReference type="InterPro" id="IPR000754">
    <property type="entry name" value="Ribosomal_uS9"/>
</dbReference>
<dbReference type="InterPro" id="IPR023035">
    <property type="entry name" value="Ribosomal_uS9_bac/plastid"/>
</dbReference>
<dbReference type="InterPro" id="IPR020574">
    <property type="entry name" value="Ribosomal_uS9_CS"/>
</dbReference>
<dbReference type="InterPro" id="IPR014721">
    <property type="entry name" value="Ribsml_uS5_D2-typ_fold_subgr"/>
</dbReference>
<dbReference type="NCBIfam" id="NF001099">
    <property type="entry name" value="PRK00132.1"/>
    <property type="match status" value="1"/>
</dbReference>
<dbReference type="PANTHER" id="PTHR21569">
    <property type="entry name" value="RIBOSOMAL PROTEIN S9"/>
    <property type="match status" value="1"/>
</dbReference>
<dbReference type="PANTHER" id="PTHR21569:SF1">
    <property type="entry name" value="SMALL RIBOSOMAL SUBUNIT PROTEIN US9M"/>
    <property type="match status" value="1"/>
</dbReference>
<dbReference type="Pfam" id="PF00380">
    <property type="entry name" value="Ribosomal_S9"/>
    <property type="match status" value="1"/>
</dbReference>
<dbReference type="SUPFAM" id="SSF54211">
    <property type="entry name" value="Ribosomal protein S5 domain 2-like"/>
    <property type="match status" value="1"/>
</dbReference>
<dbReference type="PROSITE" id="PS00360">
    <property type="entry name" value="RIBOSOMAL_S9"/>
    <property type="match status" value="1"/>
</dbReference>
<comment type="similarity">
    <text evidence="1">Belongs to the universal ribosomal protein uS9 family.</text>
</comment>
<name>RS9_BACCN</name>
<keyword id="KW-0687">Ribonucleoprotein</keyword>
<keyword id="KW-0689">Ribosomal protein</keyword>
<protein>
    <recommendedName>
        <fullName evidence="1">Small ribosomal subunit protein uS9</fullName>
    </recommendedName>
    <alternativeName>
        <fullName evidence="2">30S ribosomal protein S9</fullName>
    </alternativeName>
</protein>
<accession>A7GK54</accession>
<sequence>MAQVQYYGTGRRKSSVARVRLVPGEGRVIINGRDFENYIPFAALREVVKQPLVATETLGNYDVLVNVNGGGYTGQAGAIRHGIARALLKADPEYRLTLKRAGLLTRDARMKERKKYGLKGARRAPQFSKR</sequence>
<feature type="chain" id="PRO_1000081802" description="Small ribosomal subunit protein uS9">
    <location>
        <begin position="1"/>
        <end position="130"/>
    </location>
</feature>
<reference key="1">
    <citation type="journal article" date="2008" name="Chem. Biol. Interact.">
        <title>Extending the Bacillus cereus group genomics to putative food-borne pathogens of different toxicity.</title>
        <authorList>
            <person name="Lapidus A."/>
            <person name="Goltsman E."/>
            <person name="Auger S."/>
            <person name="Galleron N."/>
            <person name="Segurens B."/>
            <person name="Dossat C."/>
            <person name="Land M.L."/>
            <person name="Broussolle V."/>
            <person name="Brillard J."/>
            <person name="Guinebretiere M.-H."/>
            <person name="Sanchis V."/>
            <person name="Nguen-the C."/>
            <person name="Lereclus D."/>
            <person name="Richardson P."/>
            <person name="Wincker P."/>
            <person name="Weissenbach J."/>
            <person name="Ehrlich S.D."/>
            <person name="Sorokin A."/>
        </authorList>
    </citation>
    <scope>NUCLEOTIDE SEQUENCE [LARGE SCALE GENOMIC DNA]</scope>
    <source>
        <strain>DSM 22905 / CIP 110041 / 391-98 / NVH 391-98</strain>
    </source>
</reference>
<proteinExistence type="inferred from homology"/>